<gene>
    <name evidence="1" type="primary">ndhH</name>
</gene>
<feature type="chain" id="PRO_0000357994" description="NAD(P)H-quinone oxidoreductase subunit H, chloroplastic">
    <location>
        <begin position="1"/>
        <end position="393"/>
    </location>
</feature>
<reference key="1">
    <citation type="journal article" date="2005" name="Gene">
        <title>The first complete chloroplast genome sequence of a lycophyte, Huperzia lucidula (Lycopodiaceae).</title>
        <authorList>
            <person name="Wolf P.G."/>
            <person name="Karol K.G."/>
            <person name="Mandoli D.F."/>
            <person name="Kuehl J.V."/>
            <person name="Arumuganathan K."/>
            <person name="Ellis M.W."/>
            <person name="Mishler B.D."/>
            <person name="Kelch D.G."/>
            <person name="Olmstead R.G."/>
            <person name="Boore J.L."/>
        </authorList>
    </citation>
    <scope>NUCLEOTIDE SEQUENCE [LARGE SCALE GENOMIC DNA]</scope>
</reference>
<organism>
    <name type="scientific">Huperzia lucidula</name>
    <name type="common">Shining clubmoss</name>
    <name type="synonym">Lycopodium lucidulum</name>
    <dbReference type="NCBI Taxonomy" id="37429"/>
    <lineage>
        <taxon>Eukaryota</taxon>
        <taxon>Viridiplantae</taxon>
        <taxon>Streptophyta</taxon>
        <taxon>Embryophyta</taxon>
        <taxon>Tracheophyta</taxon>
        <taxon>Lycopodiopsida</taxon>
        <taxon>Lycopodiales</taxon>
        <taxon>Lycopodiaceae</taxon>
        <taxon>Huperzioideae</taxon>
        <taxon>Huperzia</taxon>
    </lineage>
</organism>
<keyword id="KW-0150">Chloroplast</keyword>
<keyword id="KW-0472">Membrane</keyword>
<keyword id="KW-0520">NAD</keyword>
<keyword id="KW-0521">NADP</keyword>
<keyword id="KW-0934">Plastid</keyword>
<keyword id="KW-0618">Plastoquinone</keyword>
<keyword id="KW-0874">Quinone</keyword>
<keyword id="KW-0793">Thylakoid</keyword>
<keyword id="KW-1278">Translocase</keyword>
<keyword id="KW-0813">Transport</keyword>
<sequence length="393" mass="45104">MTMLATEKNPMIVSMGPHHPSMHGVLRLIVTLDGENVTNCEPILGYLHRGMEKIAENRTIIQYLPYVTRWDYLATMFTEAITVNAPEKLANIQVPKRASYIRVIMPELSRIASHLLWLGPFMADIGAQTPFFYIFRERETIYDLFEAATGMRMMHNYFRIGGVAVDSPYGWVDKCSDFCNYSLPKVNEYERLITRNPIFLKRVEGVGTIGGEEAINWGLSGPMLRASGVQWDLRKVDHYECYDESDWQIQRQEEGDSLARYSVRIGETKESVKIVQQALKVIPGGPYENLEARRLNRGKNSEWNDFEYQFISRKPSPTFKLPKQEHYVRVEAPKGELGIFLMGDDSAFPWRWKIRPPGFINLQILPQLVEGVKLADIMTILGSIDITMGEVDR</sequence>
<proteinExistence type="inferred from homology"/>
<name>NDHH_HUPLU</name>
<comment type="function">
    <text evidence="1">NDH shuttles electrons from NAD(P)H:plastoquinone, via FMN and iron-sulfur (Fe-S) centers, to quinones in the photosynthetic chain and possibly in a chloroplast respiratory chain. The immediate electron acceptor for the enzyme in this species is believed to be plastoquinone. Couples the redox reaction to proton translocation, and thus conserves the redox energy in a proton gradient.</text>
</comment>
<comment type="catalytic activity">
    <reaction evidence="1">
        <text>a plastoquinone + NADH + (n+1) H(+)(in) = a plastoquinol + NAD(+) + n H(+)(out)</text>
        <dbReference type="Rhea" id="RHEA:42608"/>
        <dbReference type="Rhea" id="RHEA-COMP:9561"/>
        <dbReference type="Rhea" id="RHEA-COMP:9562"/>
        <dbReference type="ChEBI" id="CHEBI:15378"/>
        <dbReference type="ChEBI" id="CHEBI:17757"/>
        <dbReference type="ChEBI" id="CHEBI:57540"/>
        <dbReference type="ChEBI" id="CHEBI:57945"/>
        <dbReference type="ChEBI" id="CHEBI:62192"/>
    </reaction>
</comment>
<comment type="catalytic activity">
    <reaction evidence="1">
        <text>a plastoquinone + NADPH + (n+1) H(+)(in) = a plastoquinol + NADP(+) + n H(+)(out)</text>
        <dbReference type="Rhea" id="RHEA:42612"/>
        <dbReference type="Rhea" id="RHEA-COMP:9561"/>
        <dbReference type="Rhea" id="RHEA-COMP:9562"/>
        <dbReference type="ChEBI" id="CHEBI:15378"/>
        <dbReference type="ChEBI" id="CHEBI:17757"/>
        <dbReference type="ChEBI" id="CHEBI:57783"/>
        <dbReference type="ChEBI" id="CHEBI:58349"/>
        <dbReference type="ChEBI" id="CHEBI:62192"/>
    </reaction>
</comment>
<comment type="subunit">
    <text evidence="1">NDH is composed of at least 16 different subunits, 5 of which are encoded in the nucleus.</text>
</comment>
<comment type="subcellular location">
    <subcellularLocation>
        <location evidence="1">Plastid</location>
        <location evidence="1">Chloroplast thylakoid membrane</location>
        <topology evidence="1">Peripheral membrane protein</topology>
        <orientation evidence="1">Stromal side</orientation>
    </subcellularLocation>
</comment>
<comment type="similarity">
    <text evidence="1">Belongs to the complex I 49 kDa subunit family.</text>
</comment>
<dbReference type="EC" id="7.1.1.-" evidence="1"/>
<dbReference type="EMBL" id="AY660566">
    <property type="protein sequence ID" value="AAT80757.1"/>
    <property type="molecule type" value="Genomic_DNA"/>
</dbReference>
<dbReference type="RefSeq" id="YP_209561.1">
    <property type="nucleotide sequence ID" value="NC_006861.1"/>
</dbReference>
<dbReference type="SMR" id="Q5SCZ3"/>
<dbReference type="GeneID" id="3283822"/>
<dbReference type="GO" id="GO:0009535">
    <property type="term" value="C:chloroplast thylakoid membrane"/>
    <property type="evidence" value="ECO:0007669"/>
    <property type="project" value="UniProtKB-SubCell"/>
</dbReference>
<dbReference type="GO" id="GO:0051287">
    <property type="term" value="F:NAD binding"/>
    <property type="evidence" value="ECO:0007669"/>
    <property type="project" value="InterPro"/>
</dbReference>
<dbReference type="GO" id="GO:0016655">
    <property type="term" value="F:oxidoreductase activity, acting on NAD(P)H, quinone or similar compound as acceptor"/>
    <property type="evidence" value="ECO:0007669"/>
    <property type="project" value="UniProtKB-UniRule"/>
</dbReference>
<dbReference type="GO" id="GO:0048038">
    <property type="term" value="F:quinone binding"/>
    <property type="evidence" value="ECO:0007669"/>
    <property type="project" value="UniProtKB-KW"/>
</dbReference>
<dbReference type="GO" id="GO:0019684">
    <property type="term" value="P:photosynthesis, light reaction"/>
    <property type="evidence" value="ECO:0007669"/>
    <property type="project" value="UniProtKB-UniRule"/>
</dbReference>
<dbReference type="Gene3D" id="1.10.645.10">
    <property type="entry name" value="Cytochrome-c3 Hydrogenase, chain B"/>
    <property type="match status" value="1"/>
</dbReference>
<dbReference type="HAMAP" id="MF_01358">
    <property type="entry name" value="NDH1_NuoD"/>
    <property type="match status" value="1"/>
</dbReference>
<dbReference type="InterPro" id="IPR001135">
    <property type="entry name" value="NADH_Q_OxRdtase_suD"/>
</dbReference>
<dbReference type="InterPro" id="IPR014029">
    <property type="entry name" value="NADH_UbQ_OxRdtase_49kDa_CS"/>
</dbReference>
<dbReference type="InterPro" id="IPR022885">
    <property type="entry name" value="NDH1_su_D/H"/>
</dbReference>
<dbReference type="InterPro" id="IPR029014">
    <property type="entry name" value="NiFe-Hase_large"/>
</dbReference>
<dbReference type="NCBIfam" id="NF004739">
    <property type="entry name" value="PRK06075.1"/>
    <property type="match status" value="1"/>
</dbReference>
<dbReference type="NCBIfam" id="NF005649">
    <property type="entry name" value="PRK07415.1"/>
    <property type="match status" value="1"/>
</dbReference>
<dbReference type="PANTHER" id="PTHR11993:SF10">
    <property type="entry name" value="NADH DEHYDROGENASE [UBIQUINONE] IRON-SULFUR PROTEIN 2, MITOCHONDRIAL"/>
    <property type="match status" value="1"/>
</dbReference>
<dbReference type="PANTHER" id="PTHR11993">
    <property type="entry name" value="NADH-UBIQUINONE OXIDOREDUCTASE 49 KDA SUBUNIT"/>
    <property type="match status" value="1"/>
</dbReference>
<dbReference type="Pfam" id="PF00346">
    <property type="entry name" value="Complex1_49kDa"/>
    <property type="match status" value="1"/>
</dbReference>
<dbReference type="SUPFAM" id="SSF56762">
    <property type="entry name" value="HydB/Nqo4-like"/>
    <property type="match status" value="1"/>
</dbReference>
<dbReference type="PROSITE" id="PS00535">
    <property type="entry name" value="COMPLEX1_49K"/>
    <property type="match status" value="1"/>
</dbReference>
<geneLocation type="chloroplast"/>
<evidence type="ECO:0000255" key="1">
    <source>
        <dbReference type="HAMAP-Rule" id="MF_01358"/>
    </source>
</evidence>
<accession>Q5SCZ3</accession>
<protein>
    <recommendedName>
        <fullName evidence="1">NAD(P)H-quinone oxidoreductase subunit H, chloroplastic</fullName>
        <ecNumber evidence="1">7.1.1.-</ecNumber>
    </recommendedName>
    <alternativeName>
        <fullName>NAD(P)H dehydrogenase subunit H</fullName>
    </alternativeName>
    <alternativeName>
        <fullName evidence="1">NADH-plastoquinone oxidoreductase 49 kDa subunit</fullName>
    </alternativeName>
    <alternativeName>
        <fullName evidence="1">NADH-plastoquinone oxidoreductase subunit H</fullName>
    </alternativeName>
</protein>